<accession>Q9UI36</accession>
<accession>A0A087WZP2</accession>
<accession>D0FY35</accession>
<accession>D0FY36</accession>
<accession>O75523</accession>
<accession>O75687</accession>
<accession>Q5VYY3</accession>
<accession>Q5VYY4</accession>
<accession>Q96SG3</accession>
<accession>Q96SG4</accession>
<accession>Q9H524</accession>
<accession>Q9UMH4</accession>
<protein>
    <recommendedName>
        <fullName>Dachshund homolog 1</fullName>
        <shortName>Dach1</shortName>
    </recommendedName>
</protein>
<name>DACH1_HUMAN</name>
<evidence type="ECO:0000250" key="1"/>
<evidence type="ECO:0000250" key="2">
    <source>
        <dbReference type="UniProtKB" id="Q9QYB2"/>
    </source>
</evidence>
<evidence type="ECO:0000255" key="3"/>
<evidence type="ECO:0000256" key="4">
    <source>
        <dbReference type="SAM" id="MobiDB-lite"/>
    </source>
</evidence>
<evidence type="ECO:0000269" key="5">
    <source>
    </source>
</evidence>
<evidence type="ECO:0000269" key="6">
    <source>
    </source>
</evidence>
<evidence type="ECO:0000269" key="7">
    <source ref="4"/>
</evidence>
<evidence type="ECO:0000303" key="8">
    <source>
    </source>
</evidence>
<evidence type="ECO:0000303" key="9">
    <source>
    </source>
</evidence>
<evidence type="ECO:0000303" key="10">
    <source>
    </source>
</evidence>
<evidence type="ECO:0000303" key="11">
    <source>
    </source>
</evidence>
<evidence type="ECO:0000303" key="12">
    <source ref="5"/>
</evidence>
<evidence type="ECO:0000305" key="13"/>
<evidence type="ECO:0007829" key="14">
    <source>
        <dbReference type="PDB" id="1L8R"/>
    </source>
</evidence>
<organism>
    <name type="scientific">Homo sapiens</name>
    <name type="common">Human</name>
    <dbReference type="NCBI Taxonomy" id="9606"/>
    <lineage>
        <taxon>Eukaryota</taxon>
        <taxon>Metazoa</taxon>
        <taxon>Chordata</taxon>
        <taxon>Craniata</taxon>
        <taxon>Vertebrata</taxon>
        <taxon>Euteleostomi</taxon>
        <taxon>Mammalia</taxon>
        <taxon>Eutheria</taxon>
        <taxon>Euarchontoglires</taxon>
        <taxon>Primates</taxon>
        <taxon>Haplorrhini</taxon>
        <taxon>Catarrhini</taxon>
        <taxon>Hominidae</taxon>
        <taxon>Homo</taxon>
    </lineage>
</organism>
<dbReference type="EMBL" id="AF102546">
    <property type="protein sequence ID" value="AAF01351.1"/>
    <property type="molecule type" value="mRNA"/>
</dbReference>
<dbReference type="EMBL" id="AF069509">
    <property type="protein sequence ID" value="AAC33466.1"/>
    <property type="molecule type" value="mRNA"/>
</dbReference>
<dbReference type="EMBL" id="AF356492">
    <property type="protein sequence ID" value="AAL08487.1"/>
    <property type="molecule type" value="mRNA"/>
</dbReference>
<dbReference type="EMBL" id="AL138698">
    <property type="status" value="NOT_ANNOTATED_CDS"/>
    <property type="molecule type" value="Genomic_DNA"/>
</dbReference>
<dbReference type="EMBL" id="AL139186">
    <property type="status" value="NOT_ANNOTATED_CDS"/>
    <property type="molecule type" value="Genomic_DNA"/>
</dbReference>
<dbReference type="EMBL" id="AL163542">
    <property type="status" value="NOT_ANNOTATED_CDS"/>
    <property type="molecule type" value="Genomic_DNA"/>
</dbReference>
<dbReference type="EMBL" id="AL354995">
    <property type="status" value="NOT_ANNOTATED_CDS"/>
    <property type="molecule type" value="Genomic_DNA"/>
</dbReference>
<dbReference type="EMBL" id="AMYH02028239">
    <property type="status" value="NOT_ANNOTATED_CDS"/>
    <property type="molecule type" value="Genomic_DNA"/>
</dbReference>
<dbReference type="EMBL" id="CH471093">
    <property type="protein sequence ID" value="EAW80509.1"/>
    <property type="molecule type" value="Genomic_DNA"/>
</dbReference>
<dbReference type="EMBL" id="CH471093">
    <property type="protein sequence ID" value="EAW80510.1"/>
    <property type="molecule type" value="Genomic_DNA"/>
</dbReference>
<dbReference type="EMBL" id="AL079278">
    <property type="protein sequence ID" value="CAB45153.1"/>
    <property type="molecule type" value="mRNA"/>
</dbReference>
<dbReference type="EMBL" id="AJ005670">
    <property type="protein sequence ID" value="CAA06666.1"/>
    <property type="status" value="ALT_INIT"/>
    <property type="molecule type" value="mRNA"/>
</dbReference>
<dbReference type="EMBL" id="BC021219">
    <property type="protein sequence ID" value="AAH21219.2"/>
    <property type="molecule type" value="mRNA"/>
</dbReference>
<dbReference type="CCDS" id="CCDS41899.1">
    <molecule id="Q9UI36-2"/>
</dbReference>
<dbReference type="CCDS" id="CCDS91814.1">
    <molecule id="Q9UI36-1"/>
</dbReference>
<dbReference type="RefSeq" id="NP_001353641.1">
    <molecule id="Q9UI36-1"/>
    <property type="nucleotide sequence ID" value="NM_001366712.1"/>
</dbReference>
<dbReference type="RefSeq" id="NP_004383.4">
    <molecule id="Q9UI36-4"/>
    <property type="nucleotide sequence ID" value="NM_004392.6"/>
</dbReference>
<dbReference type="RefSeq" id="NP_542937.3">
    <molecule id="Q9UI36-2"/>
    <property type="nucleotide sequence ID" value="NM_080759.6"/>
</dbReference>
<dbReference type="RefSeq" id="NP_542938.3">
    <molecule id="Q9UI36-3"/>
    <property type="nucleotide sequence ID" value="NM_080760.6"/>
</dbReference>
<dbReference type="RefSeq" id="XP_011533241.1">
    <property type="nucleotide sequence ID" value="XM_011534939.2"/>
</dbReference>
<dbReference type="PDB" id="1L8R">
    <property type="method" value="X-ray"/>
    <property type="resolution" value="1.65 A"/>
    <property type="chains" value="A/B=184-282"/>
</dbReference>
<dbReference type="PDBsum" id="1L8R"/>
<dbReference type="SMR" id="Q9UI36"/>
<dbReference type="BioGRID" id="107972">
    <property type="interactions" value="98"/>
</dbReference>
<dbReference type="FunCoup" id="Q9UI36">
    <property type="interactions" value="1406"/>
</dbReference>
<dbReference type="IntAct" id="Q9UI36">
    <property type="interactions" value="50"/>
</dbReference>
<dbReference type="MINT" id="Q9UI36"/>
<dbReference type="STRING" id="9606.ENSP00000482245"/>
<dbReference type="GlyGen" id="Q9UI36">
    <property type="glycosylation" value="3 sites, 1 O-linked glycan (2 sites)"/>
</dbReference>
<dbReference type="iPTMnet" id="Q9UI36"/>
<dbReference type="PhosphoSitePlus" id="Q9UI36"/>
<dbReference type="BioMuta" id="DACH1"/>
<dbReference type="DMDM" id="519668677"/>
<dbReference type="jPOST" id="Q9UI36"/>
<dbReference type="MassIVE" id="Q9UI36"/>
<dbReference type="PaxDb" id="9606-ENSP00000482245"/>
<dbReference type="PeptideAtlas" id="Q9UI36"/>
<dbReference type="ProteomicsDB" id="12719"/>
<dbReference type="ProteomicsDB" id="12720"/>
<dbReference type="ProteomicsDB" id="84464">
    <molecule id="Q9UI36-1"/>
</dbReference>
<dbReference type="ProteomicsDB" id="84465">
    <molecule id="Q9UI36-2"/>
</dbReference>
<dbReference type="ProteomicsDB" id="84466">
    <molecule id="Q9UI36-3"/>
</dbReference>
<dbReference type="ProteomicsDB" id="84467">
    <molecule id="Q9UI36-4"/>
</dbReference>
<dbReference type="Pumba" id="Q9UI36"/>
<dbReference type="Antibodypedia" id="72801">
    <property type="antibodies" value="313 antibodies from 36 providers"/>
</dbReference>
<dbReference type="DNASU" id="1602"/>
<dbReference type="Ensembl" id="ENST00000613252.5">
    <molecule id="Q9UI36-2"/>
    <property type="protein sequence ID" value="ENSP00000482245.1"/>
    <property type="gene ID" value="ENSG00000276644.5"/>
</dbReference>
<dbReference type="Ensembl" id="ENST00000619232.2">
    <molecule id="Q9UI36-1"/>
    <property type="protein sequence ID" value="ENSP00000482797.1"/>
    <property type="gene ID" value="ENSG00000276644.5"/>
</dbReference>
<dbReference type="GeneID" id="1602"/>
<dbReference type="KEGG" id="hsa:1602"/>
<dbReference type="MANE-Select" id="ENST00000613252.5">
    <molecule id="Q9UI36-2"/>
    <property type="protein sequence ID" value="ENSP00000482245.1"/>
    <property type="RefSeq nucleotide sequence ID" value="NM_080759.6"/>
    <property type="RefSeq protein sequence ID" value="NP_542937.3"/>
</dbReference>
<dbReference type="UCSC" id="uc058xki.1">
    <molecule id="Q9UI36-1"/>
    <property type="organism name" value="human"/>
</dbReference>
<dbReference type="AGR" id="HGNC:2663"/>
<dbReference type="CTD" id="1602"/>
<dbReference type="DisGeNET" id="1602"/>
<dbReference type="GeneCards" id="DACH1"/>
<dbReference type="HGNC" id="HGNC:2663">
    <property type="gene designation" value="DACH1"/>
</dbReference>
<dbReference type="HPA" id="ENSG00000276644">
    <property type="expression patterns" value="Tissue enhanced (retina)"/>
</dbReference>
<dbReference type="MalaCards" id="DACH1"/>
<dbReference type="MIM" id="603803">
    <property type="type" value="gene"/>
</dbReference>
<dbReference type="neXtProt" id="NX_Q9UI36"/>
<dbReference type="OpenTargets" id="ENSG00000276644"/>
<dbReference type="PharmGKB" id="PA27134"/>
<dbReference type="VEuPathDB" id="HostDB:ENSG00000276644"/>
<dbReference type="eggNOG" id="KOG3915">
    <property type="taxonomic scope" value="Eukaryota"/>
</dbReference>
<dbReference type="GeneTree" id="ENSGT00390000001134"/>
<dbReference type="HOGENOM" id="CLU_027923_0_0_1"/>
<dbReference type="InParanoid" id="Q9UI36"/>
<dbReference type="OMA" id="MGHEAKR"/>
<dbReference type="OrthoDB" id="6436112at2759"/>
<dbReference type="PAN-GO" id="Q9UI36">
    <property type="GO annotations" value="5 GO annotations based on evolutionary models"/>
</dbReference>
<dbReference type="PhylomeDB" id="Q9UI36"/>
<dbReference type="TreeFam" id="TF316697"/>
<dbReference type="PathwayCommons" id="Q9UI36"/>
<dbReference type="SignaLink" id="Q9UI36"/>
<dbReference type="SIGNOR" id="Q9UI36"/>
<dbReference type="BioGRID-ORCS" id="1602">
    <property type="hits" value="17 hits in 1147 CRISPR screens"/>
</dbReference>
<dbReference type="ChiTaRS" id="DACH1">
    <property type="organism name" value="human"/>
</dbReference>
<dbReference type="EvolutionaryTrace" id="Q9UI36"/>
<dbReference type="GeneWiki" id="DACH1"/>
<dbReference type="GenomeRNAi" id="1602"/>
<dbReference type="Pharos" id="Q9UI36">
    <property type="development level" value="Tbio"/>
</dbReference>
<dbReference type="PRO" id="PR:Q9UI36"/>
<dbReference type="Proteomes" id="UP000005640">
    <property type="component" value="Chromosome 13"/>
</dbReference>
<dbReference type="RNAct" id="Q9UI36">
    <property type="molecule type" value="protein"/>
</dbReference>
<dbReference type="Bgee" id="ENSG00000276644">
    <property type="expression patterns" value="Expressed in ventricular zone and 162 other cell types or tissues"/>
</dbReference>
<dbReference type="GO" id="GO:0005829">
    <property type="term" value="C:cytosol"/>
    <property type="evidence" value="ECO:0000314"/>
    <property type="project" value="HPA"/>
</dbReference>
<dbReference type="GO" id="GO:0005794">
    <property type="term" value="C:Golgi apparatus"/>
    <property type="evidence" value="ECO:0000314"/>
    <property type="project" value="HPA"/>
</dbReference>
<dbReference type="GO" id="GO:0016607">
    <property type="term" value="C:nuclear speck"/>
    <property type="evidence" value="ECO:0000314"/>
    <property type="project" value="HPA"/>
</dbReference>
<dbReference type="GO" id="GO:0005654">
    <property type="term" value="C:nucleoplasm"/>
    <property type="evidence" value="ECO:0000314"/>
    <property type="project" value="HPA"/>
</dbReference>
<dbReference type="GO" id="GO:0005634">
    <property type="term" value="C:nucleus"/>
    <property type="evidence" value="ECO:0000318"/>
    <property type="project" value="GO_Central"/>
</dbReference>
<dbReference type="GO" id="GO:0005667">
    <property type="term" value="C:transcription regulator complex"/>
    <property type="evidence" value="ECO:0000318"/>
    <property type="project" value="GO_Central"/>
</dbReference>
<dbReference type="GO" id="GO:0000981">
    <property type="term" value="F:DNA-binding transcription factor activity, RNA polymerase II-specific"/>
    <property type="evidence" value="ECO:0000318"/>
    <property type="project" value="GO_Central"/>
</dbReference>
<dbReference type="GO" id="GO:0001227">
    <property type="term" value="F:DNA-binding transcription repressor activity, RNA polymerase II-specific"/>
    <property type="evidence" value="ECO:0000314"/>
    <property type="project" value="BHF-UCL"/>
</dbReference>
<dbReference type="GO" id="GO:0000978">
    <property type="term" value="F:RNA polymerase II cis-regulatory region sequence-specific DNA binding"/>
    <property type="evidence" value="ECO:0000314"/>
    <property type="project" value="BHF-UCL"/>
</dbReference>
<dbReference type="GO" id="GO:0000977">
    <property type="term" value="F:RNA polymerase II transcription regulatory region sequence-specific DNA binding"/>
    <property type="evidence" value="ECO:0000314"/>
    <property type="project" value="BHF-UCL"/>
</dbReference>
<dbReference type="GO" id="GO:0046545">
    <property type="term" value="P:development of primary female sexual characteristics"/>
    <property type="evidence" value="ECO:0007669"/>
    <property type="project" value="Ensembl"/>
</dbReference>
<dbReference type="GO" id="GO:0030336">
    <property type="term" value="P:negative regulation of cell migration"/>
    <property type="evidence" value="ECO:0000314"/>
    <property type="project" value="BHF-UCL"/>
</dbReference>
<dbReference type="GO" id="GO:0060244">
    <property type="term" value="P:negative regulation of cell proliferation involved in contact inhibition"/>
    <property type="evidence" value="ECO:0007669"/>
    <property type="project" value="Ensembl"/>
</dbReference>
<dbReference type="GO" id="GO:2000279">
    <property type="term" value="P:negative regulation of DNA biosynthetic process"/>
    <property type="evidence" value="ECO:0000314"/>
    <property type="project" value="CACAO"/>
</dbReference>
<dbReference type="GO" id="GO:0045892">
    <property type="term" value="P:negative regulation of DNA-templated transcription"/>
    <property type="evidence" value="ECO:0000315"/>
    <property type="project" value="CACAO"/>
</dbReference>
<dbReference type="GO" id="GO:0048147">
    <property type="term" value="P:negative regulation of fibroblast proliferation"/>
    <property type="evidence" value="ECO:0007669"/>
    <property type="project" value="Ensembl"/>
</dbReference>
<dbReference type="GO" id="GO:0010944">
    <property type="term" value="P:negative regulation of transcription by competitive promoter binding"/>
    <property type="evidence" value="ECO:0000315"/>
    <property type="project" value="BHF-UCL"/>
</dbReference>
<dbReference type="GO" id="GO:0000122">
    <property type="term" value="P:negative regulation of transcription by RNA polymerase II"/>
    <property type="evidence" value="ECO:0000314"/>
    <property type="project" value="BHF-UCL"/>
</dbReference>
<dbReference type="GO" id="GO:0033262">
    <property type="term" value="P:regulation of nuclear cell cycle DNA replication"/>
    <property type="evidence" value="ECO:0007669"/>
    <property type="project" value="Ensembl"/>
</dbReference>
<dbReference type="GO" id="GO:0006357">
    <property type="term" value="P:regulation of transcription by RNA polymerase II"/>
    <property type="evidence" value="ECO:0000318"/>
    <property type="project" value="GO_Central"/>
</dbReference>
<dbReference type="GO" id="GO:0007585">
    <property type="term" value="P:respiratory gaseous exchange by respiratory system"/>
    <property type="evidence" value="ECO:0007669"/>
    <property type="project" value="Ensembl"/>
</dbReference>
<dbReference type="GO" id="GO:0001967">
    <property type="term" value="P:suckling behavior"/>
    <property type="evidence" value="ECO:0007669"/>
    <property type="project" value="Ensembl"/>
</dbReference>
<dbReference type="GO" id="GO:0044342">
    <property type="term" value="P:type B pancreatic cell proliferation"/>
    <property type="evidence" value="ECO:0007669"/>
    <property type="project" value="Ensembl"/>
</dbReference>
<dbReference type="CDD" id="cd21081">
    <property type="entry name" value="DHD_Dac"/>
    <property type="match status" value="1"/>
</dbReference>
<dbReference type="FunFam" id="3.10.260.20:FF:000001">
    <property type="entry name" value="Dachshund homolog 1"/>
    <property type="match status" value="1"/>
</dbReference>
<dbReference type="Gene3D" id="3.10.260.20">
    <property type="entry name" value="Ski"/>
    <property type="match status" value="1"/>
</dbReference>
<dbReference type="InterPro" id="IPR052417">
    <property type="entry name" value="Dachshund_domain"/>
</dbReference>
<dbReference type="InterPro" id="IPR009061">
    <property type="entry name" value="DNA-bd_dom_put_sf"/>
</dbReference>
<dbReference type="InterPro" id="IPR003380">
    <property type="entry name" value="SKI/SNO/DAC"/>
</dbReference>
<dbReference type="InterPro" id="IPR037000">
    <property type="entry name" value="Ski_DNA-bd_sf"/>
</dbReference>
<dbReference type="PANTHER" id="PTHR12577">
    <property type="entry name" value="DACHSHUND"/>
    <property type="match status" value="1"/>
</dbReference>
<dbReference type="PANTHER" id="PTHR12577:SF14">
    <property type="entry name" value="DACHSHUND HOMOLOG 1"/>
    <property type="match status" value="1"/>
</dbReference>
<dbReference type="Pfam" id="PF02437">
    <property type="entry name" value="Ski_Sno_DHD"/>
    <property type="match status" value="1"/>
</dbReference>
<dbReference type="SUPFAM" id="SSF46955">
    <property type="entry name" value="Putative DNA-binding domain"/>
    <property type="match status" value="1"/>
</dbReference>
<comment type="function">
    <text evidence="1 6">Transcription factor that is involved in regulation of organogenesis. Seems to be a regulator of SIX1, SIX6 and probably SIX5. Corepression of precursor cell proliferation in myoblasts by SIX1 is switched to coactivation through recruitment of EYA3 to the SIX1-DACH1 complex. Transcriptional activation also seems to involve association of CREBBP. Seems to act as a corepressor of SIX6 in regulating proliferation by directly repressing cyclin-dependent kinase inhibitors, including the p27Kip1 promoter (By similarity). Inhibits TGF-beta signaling through interaction with SMAD4 and NCOR1. Binds to chromatin DNA via its DACHbox-N domain (By similarity).</text>
</comment>
<comment type="subunit">
    <text evidence="1 6">Interacts with SIX1, SIX6 and EYA3. Interacts with NCOR1 and HDAC3 through its N-terminus. Interacts with SIN3A through its C-terminus (By similarity). Interacts with SMAD3 and SMAD4.</text>
</comment>
<comment type="interaction">
    <interactant intactId="EBI-347111">
        <id>Q9UI36</id>
    </interactant>
    <interactant intactId="EBI-372578">
        <id>Q9UJ70</id>
        <label>NAGK</label>
    </interactant>
    <organismsDiffer>false</organismsDiffer>
    <experiments>3</experiments>
</comment>
<comment type="interaction">
    <interactant intactId="EBI-347111">
        <id>Q9UI36</id>
    </interactant>
    <interactant intactId="EBI-347233">
        <id>O75376</id>
        <label>NCOR1</label>
    </interactant>
    <organismsDiffer>false</organismsDiffer>
    <experiments>2</experiments>
</comment>
<comment type="interaction">
    <interactant intactId="EBI-347111">
        <id>Q9UI36</id>
    </interactant>
    <interactant intactId="EBI-347263">
        <id>Q13485</id>
        <label>SMAD4</label>
    </interactant>
    <organismsDiffer>false</organismsDiffer>
    <experiments>3</experiments>
</comment>
<comment type="interaction">
    <interactant intactId="EBI-10186082">
        <id>Q9UI36-2</id>
    </interactant>
    <interactant intactId="EBI-2371423">
        <id>O43865</id>
        <label>AHCYL1</label>
    </interactant>
    <organismsDiffer>false</organismsDiffer>
    <experiments>10</experiments>
</comment>
<comment type="interaction">
    <interactant intactId="EBI-10186082">
        <id>Q9UI36-2</id>
    </interactant>
    <interactant intactId="EBI-6657662">
        <id>P61328</id>
        <label>FGF12</label>
    </interactant>
    <organismsDiffer>false</organismsDiffer>
    <experiments>3</experiments>
</comment>
<comment type="interaction">
    <interactant intactId="EBI-10186082">
        <id>Q9UI36-2</id>
    </interactant>
    <interactant intactId="EBI-10699759">
        <id>P61328-2</id>
        <label>FGF12</label>
    </interactant>
    <organismsDiffer>false</organismsDiffer>
    <experiments>3</experiments>
</comment>
<comment type="interaction">
    <interactant intactId="EBI-10186082">
        <id>Q9UI36-2</id>
    </interactant>
    <interactant intactId="EBI-742459">
        <id>Q9BU76</id>
        <label>MMTAG2</label>
    </interactant>
    <organismsDiffer>false</organismsDiffer>
    <experiments>3</experiments>
</comment>
<comment type="interaction">
    <interactant intactId="EBI-10186082">
        <id>Q9UI36-2</id>
    </interactant>
    <interactant intactId="EBI-372578">
        <id>Q9UJ70</id>
        <label>NAGK</label>
    </interactant>
    <organismsDiffer>false</organismsDiffer>
    <experiments>5</experiments>
</comment>
<comment type="interaction">
    <interactant intactId="EBI-10186082">
        <id>Q9UI36-2</id>
    </interactant>
    <interactant intactId="EBI-11526455">
        <id>Q9UJ70-2</id>
        <label>NAGK</label>
    </interactant>
    <organismsDiffer>false</organismsDiffer>
    <experiments>3</experiments>
</comment>
<comment type="interaction">
    <interactant intactId="EBI-10186082">
        <id>Q9UI36-2</id>
    </interactant>
    <interactant intactId="EBI-396072">
        <id>Q13427</id>
        <label>PPIG</label>
    </interactant>
    <organismsDiffer>false</organismsDiffer>
    <experiments>3</experiments>
</comment>
<comment type="interaction">
    <interactant intactId="EBI-10186082">
        <id>Q9UI36-2</id>
    </interactant>
    <interactant intactId="EBI-2805516">
        <id>P31321</id>
        <label>PRKAR1B</label>
    </interactant>
    <organismsDiffer>false</organismsDiffer>
    <experiments>3</experiments>
</comment>
<comment type="interaction">
    <interactant intactId="EBI-10186082">
        <id>Q9UI36-2</id>
    </interactant>
    <interactant intactId="EBI-2130308">
        <id>Q9UBS8</id>
        <label>RNF14</label>
    </interactant>
    <organismsDiffer>false</organismsDiffer>
    <experiments>6</experiments>
</comment>
<comment type="interaction">
    <interactant intactId="EBI-10186082">
        <id>Q9UI36-2</id>
    </interactant>
    <interactant intactId="EBI-11975029">
        <id>Q05519-2</id>
        <label>SRSF11</label>
    </interactant>
    <organismsDiffer>false</organismsDiffer>
    <experiments>3</experiments>
</comment>
<comment type="interaction">
    <interactant intactId="EBI-10186082">
        <id>Q9UI36-2</id>
    </interactant>
    <interactant intactId="EBI-742339">
        <id>P26368</id>
        <label>U2AF2</label>
    </interactant>
    <organismsDiffer>false</organismsDiffer>
    <experiments>3</experiments>
</comment>
<comment type="interaction">
    <interactant intactId="EBI-10186082">
        <id>Q9UI36-2</id>
    </interactant>
    <interactant intactId="EBI-597063">
        <id>Q8TBK6</id>
        <label>ZCCHC10</label>
    </interactant>
    <organismsDiffer>false</organismsDiffer>
    <experiments>3</experiments>
</comment>
<comment type="subcellular location">
    <subcellularLocation>
        <location evidence="6">Nucleus</location>
    </subcellularLocation>
</comment>
<comment type="alternative products">
    <event type="alternative splicing"/>
    <isoform>
        <id>Q9UI36-1</id>
        <name>1</name>
        <sequence type="displayed"/>
    </isoform>
    <isoform>
        <id>Q9UI36-2</id>
        <name>2</name>
        <sequence type="described" ref="VSP_009872"/>
    </isoform>
    <isoform>
        <id>Q9UI36-3</id>
        <name>3</name>
        <sequence type="described" ref="VSP_009872 VSP_009873"/>
    </isoform>
    <isoform>
        <id>Q9UI36-4</id>
        <name>4</name>
        <sequence type="described" ref="VSP_009486"/>
    </isoform>
    <text>Additional isoforms seem to exist.</text>
</comment>
<comment type="tissue specificity">
    <text evidence="5">Widely expressed. Isoform 2 is found in brain, heart, kidney, liver, leukocytes and spleen. Isoform 3 is found in liver and heart. Isoform 4 is found in spleen.</text>
</comment>
<comment type="domain">
    <text>The DACHbox-N/DD1 domain forms a structure containing a DNA binding motif similar to that of the forkhead/winged helix domain.</text>
</comment>
<comment type="miscellaneous">
    <molecule>Isoform 2</molecule>
    <text evidence="13">Major.</text>
</comment>
<comment type="similarity">
    <text evidence="13">Belongs to the DACH/dachshund family.</text>
</comment>
<comment type="sequence caution" evidence="13">
    <conflict type="erroneous initiation">
        <sequence resource="EMBL-CDS" id="CAA06666"/>
    </conflict>
    <text>Truncated N-terminus.</text>
</comment>
<feature type="chain" id="PRO_0000095597" description="Dachshund homolog 1">
    <location>
        <begin position="1"/>
        <end position="758"/>
    </location>
</feature>
<feature type="region of interest" description="Disordered" evidence="4">
    <location>
        <begin position="1"/>
        <end position="105"/>
    </location>
</feature>
<feature type="region of interest" description="Disordered" evidence="4">
    <location>
        <begin position="134"/>
        <end position="185"/>
    </location>
</feature>
<feature type="region of interest" description="Interaction with SIX6 and HDAC3" evidence="1">
    <location>
        <begin position="189"/>
        <end position="384"/>
    </location>
</feature>
<feature type="region of interest" description="DACHbox-N">
    <location>
        <begin position="189"/>
        <end position="275"/>
    </location>
</feature>
<feature type="region of interest" description="Disordered" evidence="4">
    <location>
        <begin position="280"/>
        <end position="302"/>
    </location>
</feature>
<feature type="region of interest" description="Disordered" evidence="4">
    <location>
        <begin position="358"/>
        <end position="414"/>
    </location>
</feature>
<feature type="region of interest" description="Disordered" evidence="4">
    <location>
        <begin position="474"/>
        <end position="532"/>
    </location>
</feature>
<feature type="region of interest" description="Disordered" evidence="4">
    <location>
        <begin position="544"/>
        <end position="564"/>
    </location>
</feature>
<feature type="region of interest" description="DACHbox-C">
    <location>
        <begin position="616"/>
        <end position="696"/>
    </location>
</feature>
<feature type="region of interest" description="Interaction with SIN3A" evidence="1">
    <location>
        <begin position="627"/>
        <end position="706"/>
    </location>
</feature>
<feature type="coiled-coil region" evidence="3">
    <location>
        <begin position="630"/>
        <end position="718"/>
    </location>
</feature>
<feature type="compositionally biased region" description="Low complexity" evidence="4">
    <location>
        <begin position="20"/>
        <end position="53"/>
    </location>
</feature>
<feature type="compositionally biased region" description="Gly residues" evidence="4">
    <location>
        <begin position="73"/>
        <end position="102"/>
    </location>
</feature>
<feature type="compositionally biased region" description="Low complexity" evidence="4">
    <location>
        <begin position="140"/>
        <end position="163"/>
    </location>
</feature>
<feature type="compositionally biased region" description="Polar residues" evidence="4">
    <location>
        <begin position="174"/>
        <end position="185"/>
    </location>
</feature>
<feature type="compositionally biased region" description="Polar residues" evidence="4">
    <location>
        <begin position="292"/>
        <end position="301"/>
    </location>
</feature>
<feature type="compositionally biased region" description="Polar residues" evidence="4">
    <location>
        <begin position="358"/>
        <end position="380"/>
    </location>
</feature>
<feature type="compositionally biased region" description="Polar residues" evidence="4">
    <location>
        <begin position="387"/>
        <end position="399"/>
    </location>
</feature>
<feature type="compositionally biased region" description="Low complexity" evidence="4">
    <location>
        <begin position="506"/>
        <end position="524"/>
    </location>
</feature>
<feature type="compositionally biased region" description="Basic and acidic residues" evidence="4">
    <location>
        <begin position="555"/>
        <end position="564"/>
    </location>
</feature>
<feature type="modified residue" description="Phosphoserine" evidence="2">
    <location>
        <position position="491"/>
    </location>
</feature>
<feature type="splice variant" id="VSP_009486" description="In isoform 4." evidence="13">
    <location>
        <begin position="322"/>
        <end position="575"/>
    </location>
</feature>
<feature type="splice variant" id="VSP_009872" description="In isoform 2 and isoform 3." evidence="8 9 10 11 12">
    <location>
        <begin position="376"/>
        <end position="427"/>
    </location>
</feature>
<feature type="splice variant" id="VSP_009873" description="In isoform 3." evidence="13">
    <location>
        <begin position="428"/>
        <end position="575"/>
    </location>
</feature>
<feature type="sequence variant" id="VAR_080662" evidence="7">
    <original>T</original>
    <variation>TGG</variation>
    <location>
        <position position="73"/>
    </location>
</feature>
<feature type="helix" evidence="14">
    <location>
        <begin position="184"/>
        <end position="186"/>
    </location>
</feature>
<feature type="strand" evidence="14">
    <location>
        <begin position="189"/>
        <end position="193"/>
    </location>
</feature>
<feature type="strand" evidence="14">
    <location>
        <begin position="196"/>
        <end position="203"/>
    </location>
</feature>
<feature type="strand" evidence="14">
    <location>
        <begin position="206"/>
        <end position="210"/>
    </location>
</feature>
<feature type="helix" evidence="14">
    <location>
        <begin position="211"/>
        <end position="218"/>
    </location>
</feature>
<feature type="turn" evidence="14">
    <location>
        <begin position="219"/>
        <end position="223"/>
    </location>
</feature>
<feature type="helix" evidence="14">
    <location>
        <begin position="226"/>
        <end position="235"/>
    </location>
</feature>
<feature type="helix" evidence="14">
    <location>
        <begin position="245"/>
        <end position="253"/>
    </location>
</feature>
<feature type="strand" evidence="14">
    <location>
        <begin position="265"/>
        <end position="268"/>
    </location>
</feature>
<feature type="helix" evidence="14">
    <location>
        <begin position="269"/>
        <end position="280"/>
    </location>
</feature>
<gene>
    <name type="primary">DACH1</name>
    <name type="synonym">DACH</name>
</gene>
<reference key="1">
    <citation type="journal article" date="1999" name="Dev. Genes Evol.">
        <title>Molecular cloning and expression of the human and mouse homologues of the Drosophila dachshund gene.</title>
        <authorList>
            <person name="Kozmik Z."/>
            <person name="Pfeffer P."/>
            <person name="Kralova J."/>
            <person name="Paces J."/>
            <person name="Paces V."/>
            <person name="Kalousova A."/>
            <person name="Cvekl A."/>
        </authorList>
    </citation>
    <scope>NUCLEOTIDE SEQUENCE [MRNA] (ISOFORM 2)</scope>
</reference>
<reference key="2">
    <citation type="journal article" date="2001" name="Genomics">
        <title>Dach: genomic characterization, evaluation as a candidate for postaxial polydactyly type A2, and developmental expression pattern of the mouse homolog.</title>
        <authorList>
            <person name="Ayres J.A."/>
            <person name="Shum L."/>
            <person name="Akarsu A.N."/>
            <person name="Dashner R."/>
            <person name="Takahashi K."/>
            <person name="Ikura T."/>
            <person name="Slavkin H.C."/>
            <person name="Nuckolls G.H."/>
        </authorList>
    </citation>
    <scope>NUCLEOTIDE SEQUENCE [MRNA] (ISOFORM 2)</scope>
    <scope>ALTERNATIVE SPLICING (ISOFORMS 3; 4 AND 5)</scope>
    <scope>TISSUE SPECIFICITY</scope>
</reference>
<reference key="3">
    <citation type="journal article" date="2004" name="Nature">
        <title>The DNA sequence and analysis of human chromosome 13.</title>
        <authorList>
            <person name="Dunham A."/>
            <person name="Matthews L.H."/>
            <person name="Burton J."/>
            <person name="Ashurst J.L."/>
            <person name="Howe K.L."/>
            <person name="Ashcroft K.J."/>
            <person name="Beare D.M."/>
            <person name="Burford D.C."/>
            <person name="Hunt S.E."/>
            <person name="Griffiths-Jones S."/>
            <person name="Jones M.C."/>
            <person name="Keenan S.J."/>
            <person name="Oliver K."/>
            <person name="Scott C.E."/>
            <person name="Ainscough R."/>
            <person name="Almeida J.P."/>
            <person name="Ambrose K.D."/>
            <person name="Andrews D.T."/>
            <person name="Ashwell R.I.S."/>
            <person name="Babbage A.K."/>
            <person name="Bagguley C.L."/>
            <person name="Bailey J."/>
            <person name="Bannerjee R."/>
            <person name="Barlow K.F."/>
            <person name="Bates K."/>
            <person name="Beasley H."/>
            <person name="Bird C.P."/>
            <person name="Bray-Allen S."/>
            <person name="Brown A.J."/>
            <person name="Brown J.Y."/>
            <person name="Burrill W."/>
            <person name="Carder C."/>
            <person name="Carter N.P."/>
            <person name="Chapman J.C."/>
            <person name="Clamp M.E."/>
            <person name="Clark S.Y."/>
            <person name="Clarke G."/>
            <person name="Clee C.M."/>
            <person name="Clegg S.C."/>
            <person name="Cobley V."/>
            <person name="Collins J.E."/>
            <person name="Corby N."/>
            <person name="Coville G.J."/>
            <person name="Deloukas P."/>
            <person name="Dhami P."/>
            <person name="Dunham I."/>
            <person name="Dunn M."/>
            <person name="Earthrowl M.E."/>
            <person name="Ellington A.G."/>
            <person name="Faulkner L."/>
            <person name="Frankish A.G."/>
            <person name="Frankland J."/>
            <person name="French L."/>
            <person name="Garner P."/>
            <person name="Garnett J."/>
            <person name="Gilbert J.G.R."/>
            <person name="Gilson C.J."/>
            <person name="Ghori J."/>
            <person name="Grafham D.V."/>
            <person name="Gribble S.M."/>
            <person name="Griffiths C."/>
            <person name="Hall R.E."/>
            <person name="Hammond S."/>
            <person name="Harley J.L."/>
            <person name="Hart E.A."/>
            <person name="Heath P.D."/>
            <person name="Howden P.J."/>
            <person name="Huckle E.J."/>
            <person name="Hunt P.J."/>
            <person name="Hunt A.R."/>
            <person name="Johnson C."/>
            <person name="Johnson D."/>
            <person name="Kay M."/>
            <person name="Kimberley A.M."/>
            <person name="King A."/>
            <person name="Laird G.K."/>
            <person name="Langford C.J."/>
            <person name="Lawlor S."/>
            <person name="Leongamornlert D.A."/>
            <person name="Lloyd D.M."/>
            <person name="Lloyd C."/>
            <person name="Loveland J.E."/>
            <person name="Lovell J."/>
            <person name="Martin S."/>
            <person name="Mashreghi-Mohammadi M."/>
            <person name="McLaren S.J."/>
            <person name="McMurray A."/>
            <person name="Milne S."/>
            <person name="Moore M.J.F."/>
            <person name="Nickerson T."/>
            <person name="Palmer S.A."/>
            <person name="Pearce A.V."/>
            <person name="Peck A.I."/>
            <person name="Pelan S."/>
            <person name="Phillimore B."/>
            <person name="Porter K.M."/>
            <person name="Rice C.M."/>
            <person name="Searle S."/>
            <person name="Sehra H.K."/>
            <person name="Shownkeen R."/>
            <person name="Skuce C.D."/>
            <person name="Smith M."/>
            <person name="Steward C.A."/>
            <person name="Sycamore N."/>
            <person name="Tester J."/>
            <person name="Thomas D.W."/>
            <person name="Tracey A."/>
            <person name="Tromans A."/>
            <person name="Tubby B."/>
            <person name="Wall M."/>
            <person name="Wallis J.M."/>
            <person name="West A.P."/>
            <person name="Whitehead S.L."/>
            <person name="Willey D.L."/>
            <person name="Wilming L."/>
            <person name="Wray P.W."/>
            <person name="Wright M.W."/>
            <person name="Young L."/>
            <person name="Coulson A."/>
            <person name="Durbin R.M."/>
            <person name="Hubbard T."/>
            <person name="Sulston J.E."/>
            <person name="Beck S."/>
            <person name="Bentley D.R."/>
            <person name="Rogers J."/>
            <person name="Ross M.T."/>
        </authorList>
    </citation>
    <scope>NUCLEOTIDE SEQUENCE [LARGE SCALE GENOMIC DNA]</scope>
</reference>
<reference key="4">
    <citation type="submission" date="2005-07" db="EMBL/GenBank/DDBJ databases">
        <authorList>
            <person name="Mural R.J."/>
            <person name="Istrail S."/>
            <person name="Sutton G.G."/>
            <person name="Florea L."/>
            <person name="Halpern A.L."/>
            <person name="Mobarry C.M."/>
            <person name="Lippert R."/>
            <person name="Walenz B."/>
            <person name="Shatkay H."/>
            <person name="Dew I."/>
            <person name="Miller J.R."/>
            <person name="Flanigan M.J."/>
            <person name="Edwards N.J."/>
            <person name="Bolanos R."/>
            <person name="Fasulo D."/>
            <person name="Halldorsson B.V."/>
            <person name="Hannenhalli S."/>
            <person name="Turner R."/>
            <person name="Yooseph S."/>
            <person name="Lu F."/>
            <person name="Nusskern D.R."/>
            <person name="Shue B.C."/>
            <person name="Zheng X.H."/>
            <person name="Zhong F."/>
            <person name="Delcher A.L."/>
            <person name="Huson D.H."/>
            <person name="Kravitz S.A."/>
            <person name="Mouchard L."/>
            <person name="Reinert K."/>
            <person name="Remington K.A."/>
            <person name="Clark A.G."/>
            <person name="Waterman M.S."/>
            <person name="Eichler E.E."/>
            <person name="Adams M.D."/>
            <person name="Hunkapiller M.W."/>
            <person name="Myers E.W."/>
            <person name="Venter J.C."/>
        </authorList>
    </citation>
    <scope>NUCLEOTIDE SEQUENCE [LARGE SCALE GENOMIC DNA]</scope>
    <scope>VARIANT GLY-GLY-73 INS</scope>
</reference>
<reference key="5">
    <citation type="submission" date="1999-06" db="EMBL/GenBank/DDBJ databases">
        <authorList>
            <consortium name="The European IMAGE consortium"/>
        </authorList>
    </citation>
    <scope>NUCLEOTIDE SEQUENCE [LARGE SCALE MRNA] OF 108-758 (ISOFORM 2)</scope>
    <source>
        <tissue>Retina</tissue>
    </source>
</reference>
<reference key="6">
    <citation type="journal article" date="1998" name="Mech. Dev.">
        <title>Mammalian and Drosophila dachshund genes are related to the Ski proto-oncogene and are expressed in eye and limb.</title>
        <authorList>
            <person name="Hammond K.L."/>
            <person name="Hanson I.M."/>
            <person name="Brown A.G."/>
            <person name="Lettice L.A."/>
            <person name="Hill R.E."/>
        </authorList>
    </citation>
    <scope>NUCLEOTIDE SEQUENCE [MRNA] OF 109-758 (ISOFORM 2)</scope>
</reference>
<reference key="7">
    <citation type="journal article" date="2004" name="Genome Res.">
        <title>The status, quality, and expansion of the NIH full-length cDNA project: the Mammalian Gene Collection (MGC).</title>
        <authorList>
            <consortium name="The MGC Project Team"/>
        </authorList>
    </citation>
    <scope>NUCLEOTIDE SEQUENCE [LARGE SCALE MRNA] OF 186-758 (ISOFORM 2)</scope>
    <source>
        <tissue>Uterus</tissue>
    </source>
</reference>
<reference key="8">
    <citation type="journal article" date="2003" name="J. Biol. Chem.">
        <title>DACH1 inhibits transforming growth factor-beta signaling through binding Smad4.</title>
        <authorList>
            <person name="Wu K."/>
            <person name="Yang Y."/>
            <person name="Wang C."/>
            <person name="Davoli M.A."/>
            <person name="D'Amico M."/>
            <person name="Li A."/>
            <person name="Cveklova K."/>
            <person name="Kozmik Z."/>
            <person name="Lisanti M.P."/>
            <person name="Russell R.G."/>
            <person name="Cvekl A."/>
            <person name="Pestell R.G."/>
        </authorList>
    </citation>
    <scope>FUNCTION IN TGF-BETA SIGNALING</scope>
    <scope>INTERACTION WITH HDAC3; SMAD3; SMAD4; NCOR1 AND SIN3A</scope>
    <scope>SUBCELLULAR LOCATION</scope>
</reference>
<reference key="9">
    <citation type="journal article" date="2002" name="Structure">
        <title>Structure of the retinal determination protein dachshund reveals a DNA binding motif.</title>
        <authorList>
            <person name="Kim S.-S."/>
            <person name="Zhang R.-G."/>
            <person name="Braunstein S.E."/>
            <person name="Joachimiak A."/>
            <person name="Cvekl A."/>
            <person name="Hegde R.S."/>
        </authorList>
    </citation>
    <scope>X-RAY CRYSTALLOGRAPHY (1.65 ANGSTROMS) OF 184-282</scope>
</reference>
<sequence length="758" mass="78562">MAVPAALIPPTQLVPPQPPISTSASSSGTTTSTSSATSSPAPSIGPPASSGPTLFRPEPIASAAAAAATVTSTGGGGGGGGSGGGGGSSGNGGGGGGGGGGSNCNPNLAAASNGSGGGGGGISAGGGVASSTPINASTGSSSSSSSSSSSSSSSSSSSSSSSSCGPLPGKPVYSTPSPVENTPQNNECKMVDLRGAKVASFTVEGCELICLPQAFDLFLKHLVGGLHTVYTKLKRLEITPVVCNVEQVRILRGLGAIQPGVNRCKLISRKDFETLYNDCTNASSRPGRPPKRTQSVTSPENSHIMPHSVPGLMSPGIIPPTGLTAAAAAAAAATNAAIAEAMKVKKIKLEAMSNYHASNNQHGADSENGDMNSSVGSSDGSWDKETLPSSPSQGPQASITHPRMPGARSLPLSHPLNHLQQSHLLPNGLELPFMMMPHPLIPVSLPPASVTMAMSQMNHLSTIANMAAAAQVQSPPSRVETSVIKERVPDSPSPAPSLEEGRRPGSHPSSHRSSSVSSSPARTESSSDRIPVHQNGLSMNQMLMGLSPNVLPGPKEGDLAGHDMGHESKRMHIEKDETPLSTPTARDSLDKLSLTGHGQPLPPGFPSPFLFPDGLSSIETLLTNIQGLLKVAIDNARAQEKQVQLEKTELKMDFLRERELRETLEKQLAMEQKNRAIVQKRLKKEKKAKRKLQEALEFETKRREQAEQTLKQAASTDSLRVLNDSLTPEIEADRSGGRTDAERTIQDGRLYLKTTVMY</sequence>
<proteinExistence type="evidence at protein level"/>
<keyword id="KW-0002">3D-structure</keyword>
<keyword id="KW-0010">Activator</keyword>
<keyword id="KW-0025">Alternative splicing</keyword>
<keyword id="KW-0175">Coiled coil</keyword>
<keyword id="KW-0217">Developmental protein</keyword>
<keyword id="KW-0238">DNA-binding</keyword>
<keyword id="KW-0539">Nucleus</keyword>
<keyword id="KW-0597">Phosphoprotein</keyword>
<keyword id="KW-1267">Proteomics identification</keyword>
<keyword id="KW-1185">Reference proteome</keyword>
<keyword id="KW-0678">Repressor</keyword>
<keyword id="KW-0804">Transcription</keyword>
<keyword id="KW-0805">Transcription regulation</keyword>